<keyword id="KW-1185">Reference proteome</keyword>
<keyword id="KW-0687">Ribonucleoprotein</keyword>
<keyword id="KW-0689">Ribosomal protein</keyword>
<name>RL7_ZYMMO</name>
<gene>
    <name evidence="1" type="primary">rplL</name>
    <name type="ordered locus">ZMO0728</name>
</gene>
<reference key="1">
    <citation type="journal article" date="2005" name="Nat. Biotechnol.">
        <title>The genome sequence of the ethanologenic bacterium Zymomonas mobilis ZM4.</title>
        <authorList>
            <person name="Seo J.-S."/>
            <person name="Chong H."/>
            <person name="Park H.S."/>
            <person name="Yoon K.-O."/>
            <person name="Jung C."/>
            <person name="Kim J.J."/>
            <person name="Hong J.H."/>
            <person name="Kim H."/>
            <person name="Kim J.-H."/>
            <person name="Kil J.-I."/>
            <person name="Park C.J."/>
            <person name="Oh H.-M."/>
            <person name="Lee J.-S."/>
            <person name="Jin S.-J."/>
            <person name="Um H.-W."/>
            <person name="Lee H.-J."/>
            <person name="Oh S.-J."/>
            <person name="Kim J.Y."/>
            <person name="Kang H.L."/>
            <person name="Lee S.Y."/>
            <person name="Lee K.J."/>
            <person name="Kang H.S."/>
        </authorList>
    </citation>
    <scope>NUCLEOTIDE SEQUENCE [LARGE SCALE GENOMIC DNA]</scope>
    <source>
        <strain>ATCC 31821 / ZM4 / CP4</strain>
    </source>
</reference>
<evidence type="ECO:0000255" key="1">
    <source>
        <dbReference type="HAMAP-Rule" id="MF_00368"/>
    </source>
</evidence>
<evidence type="ECO:0000305" key="2"/>
<feature type="chain" id="PRO_0000243532" description="Large ribosomal subunit protein bL12">
    <location>
        <begin position="1"/>
        <end position="123"/>
    </location>
</feature>
<proteinExistence type="inferred from homology"/>
<sequence length="123" mass="12506">MADLAKIVEDLSALTVLEAAELSKLLEEKWGVSASAAVAVAAAPAAGGAAAEEKTEFDVILTGDGGKKINVIKEIRAITGLGLTDAKALVEGAPKPVKEGVAKDEAEKLKKQLEAAGATVELK</sequence>
<dbReference type="EMBL" id="AE008692">
    <property type="protein sequence ID" value="AAV89352.1"/>
    <property type="molecule type" value="Genomic_DNA"/>
</dbReference>
<dbReference type="RefSeq" id="WP_011240613.1">
    <property type="nucleotide sequence ID" value="NZ_CP035711.1"/>
</dbReference>
<dbReference type="SMR" id="Q5NPK7"/>
<dbReference type="STRING" id="264203.ZMO0728"/>
<dbReference type="GeneID" id="79904100"/>
<dbReference type="KEGG" id="zmo:ZMO0728"/>
<dbReference type="eggNOG" id="COG0222">
    <property type="taxonomic scope" value="Bacteria"/>
</dbReference>
<dbReference type="HOGENOM" id="CLU_086499_3_0_5"/>
<dbReference type="Proteomes" id="UP000001173">
    <property type="component" value="Chromosome"/>
</dbReference>
<dbReference type="GO" id="GO:0022625">
    <property type="term" value="C:cytosolic large ribosomal subunit"/>
    <property type="evidence" value="ECO:0007669"/>
    <property type="project" value="TreeGrafter"/>
</dbReference>
<dbReference type="GO" id="GO:0003729">
    <property type="term" value="F:mRNA binding"/>
    <property type="evidence" value="ECO:0007669"/>
    <property type="project" value="TreeGrafter"/>
</dbReference>
<dbReference type="GO" id="GO:0003735">
    <property type="term" value="F:structural constituent of ribosome"/>
    <property type="evidence" value="ECO:0007669"/>
    <property type="project" value="InterPro"/>
</dbReference>
<dbReference type="GO" id="GO:0006412">
    <property type="term" value="P:translation"/>
    <property type="evidence" value="ECO:0007669"/>
    <property type="project" value="UniProtKB-UniRule"/>
</dbReference>
<dbReference type="CDD" id="cd00387">
    <property type="entry name" value="Ribosomal_L7_L12"/>
    <property type="match status" value="1"/>
</dbReference>
<dbReference type="FunFam" id="3.30.1390.10:FF:000001">
    <property type="entry name" value="50S ribosomal protein L7/L12"/>
    <property type="match status" value="1"/>
</dbReference>
<dbReference type="Gene3D" id="3.30.1390.10">
    <property type="match status" value="1"/>
</dbReference>
<dbReference type="Gene3D" id="1.20.5.710">
    <property type="entry name" value="Single helix bin"/>
    <property type="match status" value="1"/>
</dbReference>
<dbReference type="HAMAP" id="MF_00368">
    <property type="entry name" value="Ribosomal_bL12"/>
    <property type="match status" value="1"/>
</dbReference>
<dbReference type="InterPro" id="IPR000206">
    <property type="entry name" value="Ribosomal_bL12"/>
</dbReference>
<dbReference type="InterPro" id="IPR013823">
    <property type="entry name" value="Ribosomal_bL12_C"/>
</dbReference>
<dbReference type="InterPro" id="IPR014719">
    <property type="entry name" value="Ribosomal_bL12_C/ClpS-like"/>
</dbReference>
<dbReference type="InterPro" id="IPR008932">
    <property type="entry name" value="Ribosomal_bL12_oligo"/>
</dbReference>
<dbReference type="InterPro" id="IPR036235">
    <property type="entry name" value="Ribosomal_bL12_oligo_N_sf"/>
</dbReference>
<dbReference type="NCBIfam" id="TIGR00855">
    <property type="entry name" value="L12"/>
    <property type="match status" value="1"/>
</dbReference>
<dbReference type="PANTHER" id="PTHR45987">
    <property type="entry name" value="39S RIBOSOMAL PROTEIN L12"/>
    <property type="match status" value="1"/>
</dbReference>
<dbReference type="PANTHER" id="PTHR45987:SF4">
    <property type="entry name" value="LARGE RIBOSOMAL SUBUNIT PROTEIN BL12M"/>
    <property type="match status" value="1"/>
</dbReference>
<dbReference type="Pfam" id="PF00542">
    <property type="entry name" value="Ribosomal_L12"/>
    <property type="match status" value="1"/>
</dbReference>
<dbReference type="Pfam" id="PF16320">
    <property type="entry name" value="Ribosomal_L12_N"/>
    <property type="match status" value="1"/>
</dbReference>
<dbReference type="SUPFAM" id="SSF54736">
    <property type="entry name" value="ClpS-like"/>
    <property type="match status" value="1"/>
</dbReference>
<dbReference type="SUPFAM" id="SSF48300">
    <property type="entry name" value="Ribosomal protein L7/12, oligomerisation (N-terminal) domain"/>
    <property type="match status" value="1"/>
</dbReference>
<comment type="function">
    <text evidence="1">Forms part of the ribosomal stalk which helps the ribosome interact with GTP-bound translation factors. Is thus essential for accurate translation.</text>
</comment>
<comment type="subunit">
    <text evidence="1">Homodimer. Part of the ribosomal stalk of the 50S ribosomal subunit. Forms a multimeric L10(L12)X complex, where L10 forms an elongated spine to which 2 to 4 L12 dimers bind in a sequential fashion. Binds GTP-bound translation factors.</text>
</comment>
<comment type="similarity">
    <text evidence="1">Belongs to the bacterial ribosomal protein bL12 family.</text>
</comment>
<accession>Q5NPK7</accession>
<protein>
    <recommendedName>
        <fullName evidence="1">Large ribosomal subunit protein bL12</fullName>
    </recommendedName>
    <alternativeName>
        <fullName evidence="2">50S ribosomal protein L7/L12</fullName>
    </alternativeName>
</protein>
<organism>
    <name type="scientific">Zymomonas mobilis subsp. mobilis (strain ATCC 31821 / ZM4 / CP4)</name>
    <dbReference type="NCBI Taxonomy" id="264203"/>
    <lineage>
        <taxon>Bacteria</taxon>
        <taxon>Pseudomonadati</taxon>
        <taxon>Pseudomonadota</taxon>
        <taxon>Alphaproteobacteria</taxon>
        <taxon>Sphingomonadales</taxon>
        <taxon>Zymomonadaceae</taxon>
        <taxon>Zymomonas</taxon>
    </lineage>
</organism>